<dbReference type="EC" id="2.1.1.-" evidence="1"/>
<dbReference type="EMBL" id="CR382130">
    <property type="protein sequence ID" value="CAG80799.1"/>
    <property type="molecule type" value="Genomic_DNA"/>
</dbReference>
<dbReference type="RefSeq" id="XP_502611.1">
    <property type="nucleotide sequence ID" value="XM_502611.1"/>
</dbReference>
<dbReference type="SMR" id="Q6C9Q1"/>
<dbReference type="FunCoup" id="Q6C9Q1">
    <property type="interactions" value="1150"/>
</dbReference>
<dbReference type="STRING" id="284591.Q6C9Q1"/>
<dbReference type="EnsemblFungi" id="CAG80799">
    <property type="protein sequence ID" value="CAG80799"/>
    <property type="gene ID" value="YALI0_D09251g"/>
</dbReference>
<dbReference type="KEGG" id="yli:2910837"/>
<dbReference type="VEuPathDB" id="FungiDB:YALI0_D09251g"/>
<dbReference type="HOGENOM" id="CLU_009422_8_1_1"/>
<dbReference type="InParanoid" id="Q6C9Q1"/>
<dbReference type="OMA" id="QRKDKYY"/>
<dbReference type="OrthoDB" id="115915at4891"/>
<dbReference type="Proteomes" id="UP000001300">
    <property type="component" value="Chromosome D"/>
</dbReference>
<dbReference type="GO" id="GO:0005730">
    <property type="term" value="C:nucleolus"/>
    <property type="evidence" value="ECO:0000318"/>
    <property type="project" value="GO_Central"/>
</dbReference>
<dbReference type="GO" id="GO:0030687">
    <property type="term" value="C:preribosome, large subunit precursor"/>
    <property type="evidence" value="ECO:0000318"/>
    <property type="project" value="GO_Central"/>
</dbReference>
<dbReference type="GO" id="GO:0016435">
    <property type="term" value="F:rRNA (guanine) methyltransferase activity"/>
    <property type="evidence" value="ECO:0000318"/>
    <property type="project" value="GO_Central"/>
</dbReference>
<dbReference type="GO" id="GO:0070039">
    <property type="term" value="F:rRNA (guanosine-2'-O-)-methyltransferase activity"/>
    <property type="evidence" value="ECO:0007669"/>
    <property type="project" value="UniProtKB-UniRule"/>
</dbReference>
<dbReference type="GO" id="GO:0008650">
    <property type="term" value="F:rRNA (uridine-2'-O-)-methyltransferase activity"/>
    <property type="evidence" value="ECO:0000318"/>
    <property type="project" value="GO_Central"/>
</dbReference>
<dbReference type="GO" id="GO:0000466">
    <property type="term" value="P:maturation of 5.8S rRNA from tricistronic rRNA transcript (SSU-rRNA, 5.8S rRNA, LSU-rRNA)"/>
    <property type="evidence" value="ECO:0000318"/>
    <property type="project" value="GO_Central"/>
</dbReference>
<dbReference type="GO" id="GO:0000463">
    <property type="term" value="P:maturation of LSU-rRNA from tricistronic rRNA transcript (SSU-rRNA, 5.8S rRNA, LSU-rRNA)"/>
    <property type="evidence" value="ECO:0000318"/>
    <property type="project" value="GO_Central"/>
</dbReference>
<dbReference type="GO" id="GO:0031167">
    <property type="term" value="P:rRNA methylation"/>
    <property type="evidence" value="ECO:0000318"/>
    <property type="project" value="GO_Central"/>
</dbReference>
<dbReference type="FunFam" id="3.40.50.150:FF:000004">
    <property type="entry name" value="AdoMet-dependent rRNA methyltransferase SPB1"/>
    <property type="match status" value="1"/>
</dbReference>
<dbReference type="Gene3D" id="3.40.50.150">
    <property type="entry name" value="Vaccinia Virus protein VP39"/>
    <property type="match status" value="1"/>
</dbReference>
<dbReference type="HAMAP" id="MF_01547">
    <property type="entry name" value="RNA_methyltr_E"/>
    <property type="match status" value="1"/>
</dbReference>
<dbReference type="HAMAP" id="MF_03163">
    <property type="entry name" value="RNA_methyltr_E_SPB1"/>
    <property type="match status" value="1"/>
</dbReference>
<dbReference type="InterPro" id="IPR050082">
    <property type="entry name" value="RNA_methyltr_RlmE"/>
</dbReference>
<dbReference type="InterPro" id="IPR002877">
    <property type="entry name" value="RNA_MeTrfase_FtsJ_dom"/>
</dbReference>
<dbReference type="InterPro" id="IPR015507">
    <property type="entry name" value="rRNA-MeTfrase_E"/>
</dbReference>
<dbReference type="InterPro" id="IPR012920">
    <property type="entry name" value="rRNA_MeTfrase_SPB1-like_C"/>
</dbReference>
<dbReference type="InterPro" id="IPR024576">
    <property type="entry name" value="rRNA_MeTfrase_Spb1_DUF3381"/>
</dbReference>
<dbReference type="InterPro" id="IPR029063">
    <property type="entry name" value="SAM-dependent_MTases_sf"/>
</dbReference>
<dbReference type="InterPro" id="IPR028589">
    <property type="entry name" value="SPB1-like"/>
</dbReference>
<dbReference type="PANTHER" id="PTHR10920:SF13">
    <property type="entry name" value="PRE-RRNA 2'-O-RIBOSE RNA METHYLTRANSFERASE FTSJ3"/>
    <property type="match status" value="1"/>
</dbReference>
<dbReference type="PANTHER" id="PTHR10920">
    <property type="entry name" value="RIBOSOMAL RNA METHYLTRANSFERASE"/>
    <property type="match status" value="1"/>
</dbReference>
<dbReference type="Pfam" id="PF11861">
    <property type="entry name" value="DUF3381"/>
    <property type="match status" value="1"/>
</dbReference>
<dbReference type="Pfam" id="PF01728">
    <property type="entry name" value="FtsJ"/>
    <property type="match status" value="1"/>
</dbReference>
<dbReference type="Pfam" id="PF07780">
    <property type="entry name" value="Spb1_C"/>
    <property type="match status" value="1"/>
</dbReference>
<dbReference type="SUPFAM" id="SSF53335">
    <property type="entry name" value="S-adenosyl-L-methionine-dependent methyltransferases"/>
    <property type="match status" value="1"/>
</dbReference>
<feature type="chain" id="PRO_0000155603" description="AdoMet-dependent rRNA methyltransferase SPB1">
    <location>
        <begin position="1"/>
        <end position="850"/>
    </location>
</feature>
<feature type="region of interest" description="Disordered" evidence="2">
    <location>
        <begin position="273"/>
        <end position="305"/>
    </location>
</feature>
<feature type="region of interest" description="Disordered" evidence="2">
    <location>
        <begin position="388"/>
        <end position="414"/>
    </location>
</feature>
<feature type="region of interest" description="Disordered" evidence="2">
    <location>
        <begin position="529"/>
        <end position="569"/>
    </location>
</feature>
<feature type="region of interest" description="Disordered" evidence="2">
    <location>
        <begin position="620"/>
        <end position="646"/>
    </location>
</feature>
<feature type="region of interest" description="Disordered" evidence="2">
    <location>
        <begin position="811"/>
        <end position="850"/>
    </location>
</feature>
<feature type="coiled-coil region" evidence="1">
    <location>
        <begin position="397"/>
        <end position="425"/>
    </location>
</feature>
<feature type="coiled-coil region" evidence="1">
    <location>
        <begin position="746"/>
        <end position="773"/>
    </location>
</feature>
<feature type="compositionally biased region" description="Polar residues" evidence="2">
    <location>
        <begin position="273"/>
        <end position="282"/>
    </location>
</feature>
<feature type="compositionally biased region" description="Basic and acidic residues" evidence="2">
    <location>
        <begin position="388"/>
        <end position="400"/>
    </location>
</feature>
<feature type="compositionally biased region" description="Basic residues" evidence="2">
    <location>
        <begin position="401"/>
        <end position="411"/>
    </location>
</feature>
<feature type="compositionally biased region" description="Acidic residues" evidence="2">
    <location>
        <begin position="537"/>
        <end position="561"/>
    </location>
</feature>
<feature type="compositionally biased region" description="Acidic residues" evidence="2">
    <location>
        <begin position="628"/>
        <end position="638"/>
    </location>
</feature>
<feature type="compositionally biased region" description="Basic residues" evidence="2">
    <location>
        <begin position="840"/>
        <end position="850"/>
    </location>
</feature>
<feature type="active site" description="Proton acceptor" evidence="1">
    <location>
        <position position="159"/>
    </location>
</feature>
<feature type="binding site" evidence="1">
    <location>
        <position position="58"/>
    </location>
    <ligand>
        <name>S-adenosyl-L-methionine</name>
        <dbReference type="ChEBI" id="CHEBI:59789"/>
    </ligand>
</feature>
<feature type="binding site" evidence="1">
    <location>
        <position position="60"/>
    </location>
    <ligand>
        <name>S-adenosyl-L-methionine</name>
        <dbReference type="ChEBI" id="CHEBI:59789"/>
    </ligand>
</feature>
<feature type="binding site" evidence="1">
    <location>
        <position position="78"/>
    </location>
    <ligand>
        <name>S-adenosyl-L-methionine</name>
        <dbReference type="ChEBI" id="CHEBI:59789"/>
    </ligand>
</feature>
<feature type="binding site" evidence="1">
    <location>
        <position position="94"/>
    </location>
    <ligand>
        <name>S-adenosyl-L-methionine</name>
        <dbReference type="ChEBI" id="CHEBI:59789"/>
    </ligand>
</feature>
<feature type="binding site" evidence="1">
    <location>
        <position position="119"/>
    </location>
    <ligand>
        <name>S-adenosyl-L-methionine</name>
        <dbReference type="ChEBI" id="CHEBI:59789"/>
    </ligand>
</feature>
<accession>Q6C9Q1</accession>
<proteinExistence type="inferred from homology"/>
<protein>
    <recommendedName>
        <fullName evidence="1">AdoMet-dependent rRNA methyltransferase SPB1</fullName>
        <ecNumber evidence="1">2.1.1.-</ecNumber>
    </recommendedName>
    <alternativeName>
        <fullName evidence="1">2'-O-ribose RNA methyltransferase</fullName>
    </alternativeName>
    <alternativeName>
        <fullName evidence="1">S-adenosyl-L-methionine-dependent methyltransferase</fullName>
    </alternativeName>
</protein>
<gene>
    <name evidence="1" type="primary">SPB1</name>
    <name type="ordered locus">YALI0D09251g</name>
</gene>
<reference key="1">
    <citation type="journal article" date="2004" name="Nature">
        <title>Genome evolution in yeasts.</title>
        <authorList>
            <person name="Dujon B."/>
            <person name="Sherman D."/>
            <person name="Fischer G."/>
            <person name="Durrens P."/>
            <person name="Casaregola S."/>
            <person name="Lafontaine I."/>
            <person name="de Montigny J."/>
            <person name="Marck C."/>
            <person name="Neuveglise C."/>
            <person name="Talla E."/>
            <person name="Goffard N."/>
            <person name="Frangeul L."/>
            <person name="Aigle M."/>
            <person name="Anthouard V."/>
            <person name="Babour A."/>
            <person name="Barbe V."/>
            <person name="Barnay S."/>
            <person name="Blanchin S."/>
            <person name="Beckerich J.-M."/>
            <person name="Beyne E."/>
            <person name="Bleykasten C."/>
            <person name="Boisrame A."/>
            <person name="Boyer J."/>
            <person name="Cattolico L."/>
            <person name="Confanioleri F."/>
            <person name="de Daruvar A."/>
            <person name="Despons L."/>
            <person name="Fabre E."/>
            <person name="Fairhead C."/>
            <person name="Ferry-Dumazet H."/>
            <person name="Groppi A."/>
            <person name="Hantraye F."/>
            <person name="Hennequin C."/>
            <person name="Jauniaux N."/>
            <person name="Joyet P."/>
            <person name="Kachouri R."/>
            <person name="Kerrest A."/>
            <person name="Koszul R."/>
            <person name="Lemaire M."/>
            <person name="Lesur I."/>
            <person name="Ma L."/>
            <person name="Muller H."/>
            <person name="Nicaud J.-M."/>
            <person name="Nikolski M."/>
            <person name="Oztas S."/>
            <person name="Ozier-Kalogeropoulos O."/>
            <person name="Pellenz S."/>
            <person name="Potier S."/>
            <person name="Richard G.-F."/>
            <person name="Straub M.-L."/>
            <person name="Suleau A."/>
            <person name="Swennen D."/>
            <person name="Tekaia F."/>
            <person name="Wesolowski-Louvel M."/>
            <person name="Westhof E."/>
            <person name="Wirth B."/>
            <person name="Zeniou-Meyer M."/>
            <person name="Zivanovic Y."/>
            <person name="Bolotin-Fukuhara M."/>
            <person name="Thierry A."/>
            <person name="Bouchier C."/>
            <person name="Caudron B."/>
            <person name="Scarpelli C."/>
            <person name="Gaillardin C."/>
            <person name="Weissenbach J."/>
            <person name="Wincker P."/>
            <person name="Souciet J.-L."/>
        </authorList>
    </citation>
    <scope>NUCLEOTIDE SEQUENCE [LARGE SCALE GENOMIC DNA]</scope>
    <source>
        <strain>CLIB 122 / E 150</strain>
    </source>
</reference>
<keyword id="KW-0175">Coiled coil</keyword>
<keyword id="KW-0489">Methyltransferase</keyword>
<keyword id="KW-0539">Nucleus</keyword>
<keyword id="KW-1185">Reference proteome</keyword>
<keyword id="KW-0690">Ribosome biogenesis</keyword>
<keyword id="KW-0698">rRNA processing</keyword>
<keyword id="KW-0949">S-adenosyl-L-methionine</keyword>
<keyword id="KW-0808">Transferase</keyword>
<name>SPB1_YARLI</name>
<sequence length="850" mass="97467">MGKIQKKHGKGRLDHYYRLAKEKGYRARSSFKIIQINQKYGKFLEKSKVVIDLCAAPGSWCQVASQLCPVNSLIIGCDIVPIKPLPNVITFQSDITTDHCRQQLRQYMKTWKADTVMHDGAPNVGMAWAQDAFTQSELVLQSLKLAVEFLNKGGTFVTKVFRSKDYNNLMWVFQQFFEKVEATKPPSSRNVSAEIFVVCLKFKAPKKIDPRLLDAKYVFEEVSQGNNNNEAKVFNPEVKRRKREGYEEGEYLQHKRLSILDFITDSTPIDNLGETNEMTWTPRSIKEGEVDEEEEKEKDKEARDERGNVQYVLDDKVYSDEDALKMVSKLPQTTPELLECLKDLKVLGRKEFRAILKWRLSARDLLQIDKPEAGVEVEEEELDEDQLIDKELSELGEREKARKKRERRRRNEMKQREIQRMQMNMTTPTELGIEAAKMESLFNLKQAERTGKLSELQKGKRSHVSETGDEHVTLEEAERVDYGSDDEANGLEDELESMYTEYLENKAARTAKSVVQRKKANVETEEWFGISDKKDGDESDGEMSADDVDMATIDDGEDEDDGKTARTLNNGNMFFSNPIFDNLVNAAVAKTEAKPKALDLLEPGAKDLIELEKAKKRKYAKKNGLEYSDSEDEEDDIVMETQKQDDSDIEYVHGESDSDDEPNIDLVTDQAMTMAHQLATGQTNKHKLQDDGYNRYSFRDLDGLPQWFQDDENKHNKLNKPITKEAVEALKQKMKTLNARPIKKVLEAKGRKKMRALRRLEQMKKKSELINEDGARSEKEKADDISKLMRKLAKPQKSKKKTVTVVYAGGKNKGIAGRPRGVTGKYKMVDGTMKKEQRAIRRIKKKMGKK</sequence>
<organism>
    <name type="scientific">Yarrowia lipolytica (strain CLIB 122 / E 150)</name>
    <name type="common">Yeast</name>
    <name type="synonym">Candida lipolytica</name>
    <dbReference type="NCBI Taxonomy" id="284591"/>
    <lineage>
        <taxon>Eukaryota</taxon>
        <taxon>Fungi</taxon>
        <taxon>Dikarya</taxon>
        <taxon>Ascomycota</taxon>
        <taxon>Saccharomycotina</taxon>
        <taxon>Dipodascomycetes</taxon>
        <taxon>Dipodascales</taxon>
        <taxon>Dipodascales incertae sedis</taxon>
        <taxon>Yarrowia</taxon>
    </lineage>
</organism>
<comment type="function">
    <text evidence="1">Required for proper assembly of pre-ribosomal particles during the biogenesis of the 60S ribosomal subunit.</text>
</comment>
<comment type="catalytic activity">
    <reaction evidence="1">
        <text>a ribonucleotide in rRNA + S-adenosyl-L-methionine = a 2'-O-methylribonucleotide in rRNA + S-adenosyl-L-homocysteine + H(+)</text>
        <dbReference type="Rhea" id="RHEA:48628"/>
        <dbReference type="Rhea" id="RHEA-COMP:12164"/>
        <dbReference type="Rhea" id="RHEA-COMP:12165"/>
        <dbReference type="ChEBI" id="CHEBI:15378"/>
        <dbReference type="ChEBI" id="CHEBI:57856"/>
        <dbReference type="ChEBI" id="CHEBI:59789"/>
        <dbReference type="ChEBI" id="CHEBI:90675"/>
        <dbReference type="ChEBI" id="CHEBI:90676"/>
    </reaction>
</comment>
<comment type="subunit">
    <text evidence="1">Component of the nucleolar and nucleoplasmic pre-60S ribosomal particle.</text>
</comment>
<comment type="subcellular location">
    <subcellularLocation>
        <location evidence="1">Nucleus</location>
        <location evidence="1">Nucleolus</location>
    </subcellularLocation>
</comment>
<comment type="similarity">
    <text evidence="1">Belongs to the class I-like SAM-binding methyltransferase superfamily. RNA methyltransferase RlmE family. SPB1 subfamily.</text>
</comment>
<evidence type="ECO:0000255" key="1">
    <source>
        <dbReference type="HAMAP-Rule" id="MF_03163"/>
    </source>
</evidence>
<evidence type="ECO:0000256" key="2">
    <source>
        <dbReference type="SAM" id="MobiDB-lite"/>
    </source>
</evidence>